<reference key="1">
    <citation type="journal article" date="2000" name="DNA Res.">
        <title>Structural analysis of Arabidopsis thaliana chromosome 3. I. Sequence features of the regions of 4,504,864 bp covered by sixty P1 and TAC clones.</title>
        <authorList>
            <person name="Sato S."/>
            <person name="Nakamura Y."/>
            <person name="Kaneko T."/>
            <person name="Katoh T."/>
            <person name="Asamizu E."/>
            <person name="Tabata S."/>
        </authorList>
    </citation>
    <scope>NUCLEOTIDE SEQUENCE [LARGE SCALE GENOMIC DNA]</scope>
    <source>
        <strain>cv. Columbia</strain>
    </source>
</reference>
<reference key="2">
    <citation type="journal article" date="2017" name="Plant J.">
        <title>Araport11: a complete reannotation of the Arabidopsis thaliana reference genome.</title>
        <authorList>
            <person name="Cheng C.Y."/>
            <person name="Krishnakumar V."/>
            <person name="Chan A.P."/>
            <person name="Thibaud-Nissen F."/>
            <person name="Schobel S."/>
            <person name="Town C.D."/>
        </authorList>
    </citation>
    <scope>GENOME REANNOTATION</scope>
    <source>
        <strain>cv. Columbia</strain>
    </source>
</reference>
<evidence type="ECO:0000250" key="1"/>
<evidence type="ECO:0000255" key="2"/>
<evidence type="ECO:0000256" key="3">
    <source>
        <dbReference type="SAM" id="MobiDB-lite"/>
    </source>
</evidence>
<evidence type="ECO:0000305" key="4"/>
<comment type="function">
    <text evidence="1">Potential disease resistance protein.</text>
</comment>
<comment type="domain">
    <text evidence="1">The LRR repeats probably act as specificity determinant of pathogen recognition.</text>
</comment>
<comment type="similarity">
    <text evidence="4">Belongs to the disease resistance NB-LRR family.</text>
</comment>
<comment type="online information" name="NIB-LRRS">
    <link uri="http://niblrrs.ucdavis.edu"/>
    <text>Functional and comparative genomics of disease resistance gene homologs</text>
</comment>
<name>DRL21_ARATH</name>
<gene>
    <name type="ordered locus">At3g14460</name>
    <name type="ORF">MOA2.6</name>
</gene>
<keyword id="KW-0067">ATP-binding</keyword>
<keyword id="KW-0433">Leucine-rich repeat</keyword>
<keyword id="KW-0547">Nucleotide-binding</keyword>
<keyword id="KW-0611">Plant defense</keyword>
<keyword id="KW-1185">Reference proteome</keyword>
<keyword id="KW-0677">Repeat</keyword>
<organism>
    <name type="scientific">Arabidopsis thaliana</name>
    <name type="common">Mouse-ear cress</name>
    <dbReference type="NCBI Taxonomy" id="3702"/>
    <lineage>
        <taxon>Eukaryota</taxon>
        <taxon>Viridiplantae</taxon>
        <taxon>Streptophyta</taxon>
        <taxon>Embryophyta</taxon>
        <taxon>Tracheophyta</taxon>
        <taxon>Spermatophyta</taxon>
        <taxon>Magnoliopsida</taxon>
        <taxon>eudicotyledons</taxon>
        <taxon>Gunneridae</taxon>
        <taxon>Pentapetalae</taxon>
        <taxon>rosids</taxon>
        <taxon>malvids</taxon>
        <taxon>Brassicales</taxon>
        <taxon>Brassicaceae</taxon>
        <taxon>Camelineae</taxon>
        <taxon>Arabidopsis</taxon>
    </lineage>
</organism>
<feature type="chain" id="PRO_0000212753" description="Putative disease resistance protein At3g14460">
    <location>
        <begin position="1"/>
        <end position="1424"/>
    </location>
</feature>
<feature type="domain" description="NB-ARC">
    <location>
        <begin position="152"/>
        <end position="454"/>
    </location>
</feature>
<feature type="repeat" description="LRR 1">
    <location>
        <begin position="498"/>
        <end position="523"/>
    </location>
</feature>
<feature type="repeat" description="LRR 2">
    <location>
        <begin position="552"/>
        <end position="571"/>
    </location>
</feature>
<feature type="repeat" description="LRR 3">
    <location>
        <begin position="572"/>
        <end position="595"/>
    </location>
</feature>
<feature type="repeat" description="LRR 4">
    <location>
        <begin position="597"/>
        <end position="618"/>
    </location>
</feature>
<feature type="repeat" description="LRR 5">
    <location>
        <begin position="620"/>
        <end position="641"/>
    </location>
</feature>
<feature type="repeat" description="LRR 6">
    <location>
        <begin position="642"/>
        <end position="665"/>
    </location>
</feature>
<feature type="repeat" description="LRR 7">
    <location>
        <begin position="806"/>
        <end position="830"/>
    </location>
</feature>
<feature type="repeat" description="LRR 8">
    <location>
        <begin position="1090"/>
        <end position="1114"/>
    </location>
</feature>
<feature type="repeat" description="LRR 9">
    <location>
        <begin position="1118"/>
        <end position="1139"/>
    </location>
</feature>
<feature type="repeat" description="LRR 10">
    <location>
        <begin position="1238"/>
        <end position="1262"/>
    </location>
</feature>
<feature type="repeat" description="LRR 11">
    <location>
        <begin position="1264"/>
        <end position="1286"/>
    </location>
</feature>
<feature type="repeat" description="LRR 12">
    <location>
        <begin position="1310"/>
        <end position="1336"/>
    </location>
</feature>
<feature type="region of interest" description="Disordered" evidence="3">
    <location>
        <begin position="911"/>
        <end position="977"/>
    </location>
</feature>
<feature type="region of interest" description="Disordered" evidence="3">
    <location>
        <begin position="1050"/>
        <end position="1070"/>
    </location>
</feature>
<feature type="compositionally biased region" description="Polar residues" evidence="3">
    <location>
        <begin position="912"/>
        <end position="927"/>
    </location>
</feature>
<feature type="compositionally biased region" description="Polar residues" evidence="3">
    <location>
        <begin position="934"/>
        <end position="972"/>
    </location>
</feature>
<feature type="binding site" evidence="2">
    <location>
        <begin position="200"/>
        <end position="207"/>
    </location>
    <ligand>
        <name>ATP</name>
        <dbReference type="ChEBI" id="CHEBI:30616"/>
    </ligand>
</feature>
<sequence length="1424" mass="158907">MANSYLSSCANVMVERINTSQELVELCKGKSSSALLKRLKVALVTANPVLADADQRAEHVREVKHWLTGIKDAFFQAEDILDELQTEALRRRVVAEAGGLGGLFQNLMAGREAIQKKIEPKMEKVVRLLEHHVKHIEVIGLKEYSETREPQWRQASRSRPDDLPQGRLVGRVEDKLALVNLLLSDDEISIGKPAVISVVGMPGVGKTTLTEIVFNDYRVTEHFEVKMWISAGINFNVFTVTKAVLQDITSSAVNTEDLPSLQIQLKKTLSGKRFLLVLDDFWSESDSEWESFQVAFTDAEEGSKIVLTTRSEIVSTVAKAEKIYQMKLMTNEECWELISRFAFGNISVGSINQELEGIGKRIAEQCKGLPLAARAIASHLRSKPNPDDWYAVSKNFSSYTNSILPVLKLSYDSLPPQLKRCFALCSIFPKGHVFDREELVLLWMAIDLLYQPRSSRRLEDIGNDYLGDLVAQSFFQRLDITMTSFVMHDLMNDLAKAVSGDFCFRLEDDNIPEIPSTTRHFSFSRSQCDASVAFRSICGAEFLRTILPFNSPTSLESLQLTEKVLNPLLNALSGLRILSLSHYQITNLPKSLKGLKLLRYLDLSSTKIKELPEFVCTLCNLQTLLLSNCRDLTSLPKSIAELINLRLLDLVGTPLVEMPPGIKKLRSLQKLSNFVIGRLSGAGLHELKELSHLRGTLRISELQNVAFASEAKDAGLKRKPFLDGLILKWTVKGSGFVPGSFNALACDQKEVLRMLEPHPHLKTFCIESYQGGAFPKWLGDSSFFGITSVTLSSCNLCISLPPVGQLPSLKYLSIEKFNILQKVGLDFFFGENNSRGVPFQSLQILKFYGMPRWDEWICPELEDGIFPCLQKLIIQRCPSLRKKFPEGLPSSTEVTISDCPLRAVSGGENSFRRSLTNIPESPASIPSMSRRELSSPTGNPKSDASTSAQPGFASSSQSNDDNEVTSTSSLSSLPKDRQTEDFDQYETQLGSLPQQFEEPAVISARYSGYISDIPSTLSPYMSRTSLVPDPKNEGSILPGSSSYQYHQYGIKSSVPSPRSSEAIKPSQYDDDETDMEYLKVTDISHLMELPQNLQSLHIDSCDGLTSLPENLTESYPNLHELLIIACHSLESFPGSHPPTTLKTLYIRDCKKLNFTESLQPTRSYSQLEYLFIGSSCSNLVNFPLSLFPKLRSLSIRDCESFKTFSIHAGLGDDRIALESLEIRDCPNLETFPQGGLPTPKLSSMLLSNCKKLQALPEKLFGLTSLLSLFIIKCPEIETIPGGGFPSNLRTLCISLCDKLTPRIEWGLRDLENLRNLEIDGGNEDIESFPEEGLLPKSVFSLRISRFENLKTLNRKGFHDTKAIETMEISGCDKLQISIDEDLPPLSCLRISSCSLLTETFAEVETEFFKVLNIPYVEIDGEIFS</sequence>
<accession>Q9LRR5</accession>
<dbReference type="EMBL" id="AB028617">
    <property type="protein sequence ID" value="BAB01338.1"/>
    <property type="molecule type" value="Genomic_DNA"/>
</dbReference>
<dbReference type="EMBL" id="CP002686">
    <property type="protein sequence ID" value="AEE75529.1"/>
    <property type="molecule type" value="Genomic_DNA"/>
</dbReference>
<dbReference type="RefSeq" id="NP_188064.1">
    <property type="nucleotide sequence ID" value="NM_112306.2"/>
</dbReference>
<dbReference type="SMR" id="Q9LRR5"/>
<dbReference type="STRING" id="3702.Q9LRR5"/>
<dbReference type="PaxDb" id="3702-AT3G14460.1"/>
<dbReference type="EnsemblPlants" id="AT3G14460.1">
    <property type="protein sequence ID" value="AT3G14460.1"/>
    <property type="gene ID" value="AT3G14460"/>
</dbReference>
<dbReference type="GeneID" id="820669"/>
<dbReference type="Gramene" id="AT3G14460.1">
    <property type="protein sequence ID" value="AT3G14460.1"/>
    <property type="gene ID" value="AT3G14460"/>
</dbReference>
<dbReference type="KEGG" id="ath:AT3G14460"/>
<dbReference type="Araport" id="AT3G14460"/>
<dbReference type="TAIR" id="AT3G14460">
    <property type="gene designation" value="LRRAC1"/>
</dbReference>
<dbReference type="eggNOG" id="KOG4658">
    <property type="taxonomic scope" value="Eukaryota"/>
</dbReference>
<dbReference type="HOGENOM" id="CLU_000837_8_8_1"/>
<dbReference type="InParanoid" id="Q9LRR5"/>
<dbReference type="OMA" id="ILKWTVK"/>
<dbReference type="PhylomeDB" id="Q9LRR5"/>
<dbReference type="PRO" id="PR:Q9LRR5"/>
<dbReference type="Proteomes" id="UP000006548">
    <property type="component" value="Chromosome 3"/>
</dbReference>
<dbReference type="ExpressionAtlas" id="Q9LRR5">
    <property type="expression patterns" value="baseline and differential"/>
</dbReference>
<dbReference type="GO" id="GO:0004016">
    <property type="term" value="F:adenylate cyclase activity"/>
    <property type="evidence" value="ECO:0000314"/>
    <property type="project" value="TAIR"/>
</dbReference>
<dbReference type="GO" id="GO:0043531">
    <property type="term" value="F:ADP binding"/>
    <property type="evidence" value="ECO:0007669"/>
    <property type="project" value="InterPro"/>
</dbReference>
<dbReference type="GO" id="GO:0005524">
    <property type="term" value="F:ATP binding"/>
    <property type="evidence" value="ECO:0007669"/>
    <property type="project" value="UniProtKB-KW"/>
</dbReference>
<dbReference type="GO" id="GO:0042742">
    <property type="term" value="P:defense response to bacterium"/>
    <property type="evidence" value="ECO:0000315"/>
    <property type="project" value="TAIR"/>
</dbReference>
<dbReference type="GO" id="GO:0050832">
    <property type="term" value="P:defense response to fungus"/>
    <property type="evidence" value="ECO:0000315"/>
    <property type="project" value="TAIR"/>
</dbReference>
<dbReference type="FunFam" id="3.40.50.300:FF:004468">
    <property type="entry name" value="Putative disease resistance protein At3g14460"/>
    <property type="match status" value="1"/>
</dbReference>
<dbReference type="FunFam" id="3.80.10.10:FF:001752">
    <property type="entry name" value="Putative disease resistance protein At3g14460"/>
    <property type="match status" value="1"/>
</dbReference>
<dbReference type="FunFam" id="3.80.10.10:FF:001753">
    <property type="entry name" value="Putative disease resistance protein At3g14460"/>
    <property type="match status" value="1"/>
</dbReference>
<dbReference type="Gene3D" id="1.20.5.4130">
    <property type="match status" value="1"/>
</dbReference>
<dbReference type="Gene3D" id="1.10.8.430">
    <property type="entry name" value="Helical domain of apoptotic protease-activating factors"/>
    <property type="match status" value="1"/>
</dbReference>
<dbReference type="Gene3D" id="3.40.50.300">
    <property type="entry name" value="P-loop containing nucleotide triphosphate hydrolases"/>
    <property type="match status" value="1"/>
</dbReference>
<dbReference type="Gene3D" id="3.80.10.10">
    <property type="entry name" value="Ribonuclease Inhibitor"/>
    <property type="match status" value="3"/>
</dbReference>
<dbReference type="Gene3D" id="1.10.10.10">
    <property type="entry name" value="Winged helix-like DNA-binding domain superfamily/Winged helix DNA-binding domain"/>
    <property type="match status" value="1"/>
</dbReference>
<dbReference type="InterPro" id="IPR042197">
    <property type="entry name" value="Apaf_helical"/>
</dbReference>
<dbReference type="InterPro" id="IPR003591">
    <property type="entry name" value="Leu-rich_rpt_typical-subtyp"/>
</dbReference>
<dbReference type="InterPro" id="IPR032675">
    <property type="entry name" value="LRR_dom_sf"/>
</dbReference>
<dbReference type="InterPro" id="IPR056789">
    <property type="entry name" value="LRR_R13L1-DRL21"/>
</dbReference>
<dbReference type="InterPro" id="IPR002182">
    <property type="entry name" value="NB-ARC"/>
</dbReference>
<dbReference type="InterPro" id="IPR027417">
    <property type="entry name" value="P-loop_NTPase"/>
</dbReference>
<dbReference type="InterPro" id="IPR041118">
    <property type="entry name" value="Rx_N"/>
</dbReference>
<dbReference type="InterPro" id="IPR036388">
    <property type="entry name" value="WH-like_DNA-bd_sf"/>
</dbReference>
<dbReference type="PANTHER" id="PTHR36766:SF70">
    <property type="entry name" value="DISEASE RESISTANCE PROTEIN RGA4"/>
    <property type="match status" value="1"/>
</dbReference>
<dbReference type="PANTHER" id="PTHR36766">
    <property type="entry name" value="PLANT BROAD-SPECTRUM MILDEW RESISTANCE PROTEIN RPW8"/>
    <property type="match status" value="1"/>
</dbReference>
<dbReference type="Pfam" id="PF25019">
    <property type="entry name" value="LRR_R13L1-DRL21"/>
    <property type="match status" value="1"/>
</dbReference>
<dbReference type="Pfam" id="PF00931">
    <property type="entry name" value="NB-ARC"/>
    <property type="match status" value="1"/>
</dbReference>
<dbReference type="Pfam" id="PF18052">
    <property type="entry name" value="Rx_N"/>
    <property type="match status" value="1"/>
</dbReference>
<dbReference type="Pfam" id="PF23559">
    <property type="entry name" value="WH_DRP"/>
    <property type="match status" value="1"/>
</dbReference>
<dbReference type="PRINTS" id="PR00364">
    <property type="entry name" value="DISEASERSIST"/>
</dbReference>
<dbReference type="SMART" id="SM00369">
    <property type="entry name" value="LRR_TYP"/>
    <property type="match status" value="3"/>
</dbReference>
<dbReference type="SUPFAM" id="SSF52058">
    <property type="entry name" value="L domain-like"/>
    <property type="match status" value="2"/>
</dbReference>
<dbReference type="SUPFAM" id="SSF52540">
    <property type="entry name" value="P-loop containing nucleoside triphosphate hydrolases"/>
    <property type="match status" value="1"/>
</dbReference>
<proteinExistence type="inferred from homology"/>
<protein>
    <recommendedName>
        <fullName>Putative disease resistance protein At3g14460</fullName>
    </recommendedName>
</protein>